<comment type="function">
    <text evidence="1">Catalyzes the oxidation of either pyridoxine 5'-phosphate (PNP) or pyridoxamine 5'-phosphate (PMP) into pyridoxal 5'-phosphate (PLP).</text>
</comment>
<comment type="catalytic activity">
    <reaction evidence="1">
        <text>pyridoxamine 5'-phosphate + O2 + H2O = pyridoxal 5'-phosphate + H2O2 + NH4(+)</text>
        <dbReference type="Rhea" id="RHEA:15817"/>
        <dbReference type="ChEBI" id="CHEBI:15377"/>
        <dbReference type="ChEBI" id="CHEBI:15379"/>
        <dbReference type="ChEBI" id="CHEBI:16240"/>
        <dbReference type="ChEBI" id="CHEBI:28938"/>
        <dbReference type="ChEBI" id="CHEBI:58451"/>
        <dbReference type="ChEBI" id="CHEBI:597326"/>
        <dbReference type="EC" id="1.4.3.5"/>
    </reaction>
</comment>
<comment type="catalytic activity">
    <reaction evidence="1">
        <text>pyridoxine 5'-phosphate + O2 = pyridoxal 5'-phosphate + H2O2</text>
        <dbReference type="Rhea" id="RHEA:15149"/>
        <dbReference type="ChEBI" id="CHEBI:15379"/>
        <dbReference type="ChEBI" id="CHEBI:16240"/>
        <dbReference type="ChEBI" id="CHEBI:58589"/>
        <dbReference type="ChEBI" id="CHEBI:597326"/>
        <dbReference type="EC" id="1.4.3.5"/>
    </reaction>
</comment>
<comment type="cofactor">
    <cofactor evidence="1">
        <name>FMN</name>
        <dbReference type="ChEBI" id="CHEBI:58210"/>
    </cofactor>
    <text evidence="1">Binds 1 FMN per subunit.</text>
</comment>
<comment type="pathway">
    <text evidence="1">Cofactor metabolism; pyridoxal 5'-phosphate salvage; pyridoxal 5'-phosphate from pyridoxamine 5'-phosphate: step 1/1.</text>
</comment>
<comment type="pathway">
    <text evidence="1">Cofactor metabolism; pyridoxal 5'-phosphate salvage; pyridoxal 5'-phosphate from pyridoxine 5'-phosphate: step 1/1.</text>
</comment>
<comment type="subunit">
    <text evidence="1">Homodimer.</text>
</comment>
<comment type="similarity">
    <text evidence="1">Belongs to the pyridoxamine 5'-phosphate oxidase family.</text>
</comment>
<sequence length="214" mass="25064">MDRTIADLRKDYTLEGLSEIEVDPNPFIQFKKWFEQALAAQLPEPNAMTIATSTPDGQPSARMVLLKDFDEQGFVFFTNYNSRKGQELAENPQAALVFWWAELERQVRISGRVEKVSESESDYYFYSRPANSRLGAWVSNQSEIIASREVLEQRMQEFQHKYENQEIPRPAHWGGLRVIPSEIEFWQGRSSRLHDRLLYTLLNDHSWEIHRLSP</sequence>
<gene>
    <name evidence="1" type="primary">pdxH</name>
    <name type="ordered locus">all1248</name>
</gene>
<organism>
    <name type="scientific">Nostoc sp. (strain PCC 7120 / SAG 25.82 / UTEX 2576)</name>
    <dbReference type="NCBI Taxonomy" id="103690"/>
    <lineage>
        <taxon>Bacteria</taxon>
        <taxon>Bacillati</taxon>
        <taxon>Cyanobacteriota</taxon>
        <taxon>Cyanophyceae</taxon>
        <taxon>Nostocales</taxon>
        <taxon>Nostocaceae</taxon>
        <taxon>Nostoc</taxon>
    </lineage>
</organism>
<feature type="chain" id="PRO_0000167679" description="Pyridoxine/pyridoxamine 5'-phosphate oxidase">
    <location>
        <begin position="1"/>
        <end position="214"/>
    </location>
</feature>
<feature type="binding site" evidence="1">
    <location>
        <begin position="9"/>
        <end position="12"/>
    </location>
    <ligand>
        <name>substrate</name>
    </ligand>
</feature>
<feature type="binding site" evidence="1">
    <location>
        <begin position="62"/>
        <end position="67"/>
    </location>
    <ligand>
        <name>FMN</name>
        <dbReference type="ChEBI" id="CHEBI:58210"/>
    </ligand>
</feature>
<feature type="binding site" evidence="1">
    <location>
        <position position="67"/>
    </location>
    <ligand>
        <name>substrate</name>
    </ligand>
</feature>
<feature type="binding site" evidence="1">
    <location>
        <begin position="77"/>
        <end position="78"/>
    </location>
    <ligand>
        <name>FMN</name>
        <dbReference type="ChEBI" id="CHEBI:58210"/>
    </ligand>
</feature>
<feature type="binding site" evidence="1">
    <location>
        <position position="83"/>
    </location>
    <ligand>
        <name>FMN</name>
        <dbReference type="ChEBI" id="CHEBI:58210"/>
    </ligand>
</feature>
<feature type="binding site" evidence="1">
    <location>
        <position position="84"/>
    </location>
    <ligand>
        <name>FMN</name>
        <dbReference type="ChEBI" id="CHEBI:58210"/>
    </ligand>
</feature>
<feature type="binding site" evidence="1">
    <location>
        <position position="106"/>
    </location>
    <ligand>
        <name>FMN</name>
        <dbReference type="ChEBI" id="CHEBI:58210"/>
    </ligand>
</feature>
<feature type="binding site" evidence="1">
    <location>
        <position position="124"/>
    </location>
    <ligand>
        <name>substrate</name>
    </ligand>
</feature>
<feature type="binding site" evidence="1">
    <location>
        <position position="128"/>
    </location>
    <ligand>
        <name>substrate</name>
    </ligand>
</feature>
<feature type="binding site" evidence="1">
    <location>
        <position position="132"/>
    </location>
    <ligand>
        <name>substrate</name>
    </ligand>
</feature>
<feature type="binding site" evidence="1">
    <location>
        <begin position="141"/>
        <end position="142"/>
    </location>
    <ligand>
        <name>FMN</name>
        <dbReference type="ChEBI" id="CHEBI:58210"/>
    </ligand>
</feature>
<feature type="binding site" evidence="1">
    <location>
        <position position="186"/>
    </location>
    <ligand>
        <name>FMN</name>
        <dbReference type="ChEBI" id="CHEBI:58210"/>
    </ligand>
</feature>
<feature type="binding site" evidence="1">
    <location>
        <begin position="192"/>
        <end position="194"/>
    </location>
    <ligand>
        <name>substrate</name>
    </ligand>
</feature>
<feature type="binding site" evidence="1">
    <location>
        <position position="196"/>
    </location>
    <ligand>
        <name>FMN</name>
        <dbReference type="ChEBI" id="CHEBI:58210"/>
    </ligand>
</feature>
<protein>
    <recommendedName>
        <fullName evidence="1">Pyridoxine/pyridoxamine 5'-phosphate oxidase</fullName>
        <ecNumber evidence="1">1.4.3.5</ecNumber>
    </recommendedName>
    <alternativeName>
        <fullName evidence="1">PNP/PMP oxidase</fullName>
        <shortName evidence="1">PNPOx</shortName>
    </alternativeName>
    <alternativeName>
        <fullName evidence="1">Pyridoxal 5'-phosphate synthase</fullName>
    </alternativeName>
</protein>
<dbReference type="EC" id="1.4.3.5" evidence="1"/>
<dbReference type="EMBL" id="BA000019">
    <property type="protein sequence ID" value="BAB73205.1"/>
    <property type="molecule type" value="Genomic_DNA"/>
</dbReference>
<dbReference type="PIR" id="AE1962">
    <property type="entry name" value="AE1962"/>
</dbReference>
<dbReference type="RefSeq" id="WP_010995420.1">
    <property type="nucleotide sequence ID" value="NZ_RSCN01000021.1"/>
</dbReference>
<dbReference type="SMR" id="Q8YXG5"/>
<dbReference type="STRING" id="103690.gene:10493262"/>
<dbReference type="KEGG" id="ana:all1248"/>
<dbReference type="eggNOG" id="COG0259">
    <property type="taxonomic scope" value="Bacteria"/>
</dbReference>
<dbReference type="OrthoDB" id="9780392at2"/>
<dbReference type="UniPathway" id="UPA01068">
    <property type="reaction ID" value="UER00304"/>
</dbReference>
<dbReference type="UniPathway" id="UPA01068">
    <property type="reaction ID" value="UER00305"/>
</dbReference>
<dbReference type="Proteomes" id="UP000002483">
    <property type="component" value="Chromosome"/>
</dbReference>
<dbReference type="GO" id="GO:0010181">
    <property type="term" value="F:FMN binding"/>
    <property type="evidence" value="ECO:0007669"/>
    <property type="project" value="UniProtKB-UniRule"/>
</dbReference>
<dbReference type="GO" id="GO:0004733">
    <property type="term" value="F:pyridoxamine phosphate oxidase activity"/>
    <property type="evidence" value="ECO:0007669"/>
    <property type="project" value="UniProtKB-UniRule"/>
</dbReference>
<dbReference type="GO" id="GO:0008615">
    <property type="term" value="P:pyridoxine biosynthetic process"/>
    <property type="evidence" value="ECO:0007669"/>
    <property type="project" value="UniProtKB-KW"/>
</dbReference>
<dbReference type="FunFam" id="2.30.110.10:FF:000005">
    <property type="entry name" value="NAD(P)H-hydrate epimerase"/>
    <property type="match status" value="1"/>
</dbReference>
<dbReference type="Gene3D" id="2.30.110.10">
    <property type="entry name" value="Electron Transport, Fmn-binding Protein, Chain A"/>
    <property type="match status" value="1"/>
</dbReference>
<dbReference type="HAMAP" id="MF_01629">
    <property type="entry name" value="PdxH"/>
    <property type="match status" value="1"/>
</dbReference>
<dbReference type="InterPro" id="IPR000659">
    <property type="entry name" value="Pyridox_Oxase"/>
</dbReference>
<dbReference type="InterPro" id="IPR019740">
    <property type="entry name" value="Pyridox_Oxase_CS"/>
</dbReference>
<dbReference type="InterPro" id="IPR011576">
    <property type="entry name" value="Pyridox_Oxase_N"/>
</dbReference>
<dbReference type="InterPro" id="IPR019576">
    <property type="entry name" value="Pyridoxamine_oxidase_dimer_C"/>
</dbReference>
<dbReference type="InterPro" id="IPR012349">
    <property type="entry name" value="Split_barrel_FMN-bd"/>
</dbReference>
<dbReference type="NCBIfam" id="TIGR00558">
    <property type="entry name" value="pdxH"/>
    <property type="match status" value="1"/>
</dbReference>
<dbReference type="NCBIfam" id="NF004231">
    <property type="entry name" value="PRK05679.1"/>
    <property type="match status" value="1"/>
</dbReference>
<dbReference type="PANTHER" id="PTHR10851:SF0">
    <property type="entry name" value="PYRIDOXINE-5'-PHOSPHATE OXIDASE"/>
    <property type="match status" value="1"/>
</dbReference>
<dbReference type="PANTHER" id="PTHR10851">
    <property type="entry name" value="PYRIDOXINE-5-PHOSPHATE OXIDASE"/>
    <property type="match status" value="1"/>
</dbReference>
<dbReference type="Pfam" id="PF10590">
    <property type="entry name" value="PNP_phzG_C"/>
    <property type="match status" value="1"/>
</dbReference>
<dbReference type="Pfam" id="PF01243">
    <property type="entry name" value="PNPOx_N"/>
    <property type="match status" value="1"/>
</dbReference>
<dbReference type="PIRSF" id="PIRSF000190">
    <property type="entry name" value="Pyd_amn-ph_oxd"/>
    <property type="match status" value="1"/>
</dbReference>
<dbReference type="SUPFAM" id="SSF50475">
    <property type="entry name" value="FMN-binding split barrel"/>
    <property type="match status" value="1"/>
</dbReference>
<dbReference type="PROSITE" id="PS01064">
    <property type="entry name" value="PYRIDOX_OXIDASE"/>
    <property type="match status" value="1"/>
</dbReference>
<reference key="1">
    <citation type="journal article" date="2001" name="DNA Res.">
        <title>Complete genomic sequence of the filamentous nitrogen-fixing cyanobacterium Anabaena sp. strain PCC 7120.</title>
        <authorList>
            <person name="Kaneko T."/>
            <person name="Nakamura Y."/>
            <person name="Wolk C.P."/>
            <person name="Kuritz T."/>
            <person name="Sasamoto S."/>
            <person name="Watanabe A."/>
            <person name="Iriguchi M."/>
            <person name="Ishikawa A."/>
            <person name="Kawashima K."/>
            <person name="Kimura T."/>
            <person name="Kishida Y."/>
            <person name="Kohara M."/>
            <person name="Matsumoto M."/>
            <person name="Matsuno A."/>
            <person name="Muraki A."/>
            <person name="Nakazaki N."/>
            <person name="Shimpo S."/>
            <person name="Sugimoto M."/>
            <person name="Takazawa M."/>
            <person name="Yamada M."/>
            <person name="Yasuda M."/>
            <person name="Tabata S."/>
        </authorList>
    </citation>
    <scope>NUCLEOTIDE SEQUENCE [LARGE SCALE GENOMIC DNA]</scope>
    <source>
        <strain>PCC 7120 / SAG 25.82 / UTEX 2576</strain>
    </source>
</reference>
<name>PDXH_NOSS1</name>
<proteinExistence type="inferred from homology"/>
<accession>Q8YXG5</accession>
<evidence type="ECO:0000255" key="1">
    <source>
        <dbReference type="HAMAP-Rule" id="MF_01629"/>
    </source>
</evidence>
<keyword id="KW-0285">Flavoprotein</keyword>
<keyword id="KW-0288">FMN</keyword>
<keyword id="KW-0560">Oxidoreductase</keyword>
<keyword id="KW-0664">Pyridoxine biosynthesis</keyword>
<keyword id="KW-1185">Reference proteome</keyword>